<comment type="function">
    <text evidence="1">Core subunit of the mitochondrial membrane respiratory chain NADH dehydrogenase (Complex I) that is believed to belong to the minimal assembly required for catalysis. Complex I functions in the transfer of electrons from NADH to the respiratory chain. The immediate electron acceptor for the enzyme is believed to be ubiquinone (By similarity).</text>
</comment>
<comment type="catalytic activity">
    <reaction>
        <text>a ubiquinone + NADH + 5 H(+)(in) = a ubiquinol + NAD(+) + 4 H(+)(out)</text>
        <dbReference type="Rhea" id="RHEA:29091"/>
        <dbReference type="Rhea" id="RHEA-COMP:9565"/>
        <dbReference type="Rhea" id="RHEA-COMP:9566"/>
        <dbReference type="ChEBI" id="CHEBI:15378"/>
        <dbReference type="ChEBI" id="CHEBI:16389"/>
        <dbReference type="ChEBI" id="CHEBI:17976"/>
        <dbReference type="ChEBI" id="CHEBI:57540"/>
        <dbReference type="ChEBI" id="CHEBI:57945"/>
        <dbReference type="EC" id="7.1.1.2"/>
    </reaction>
</comment>
<comment type="subunit">
    <text>Complex I is composed of at least 49 different subunits.</text>
</comment>
<comment type="subcellular location">
    <subcellularLocation>
        <location evidence="1">Mitochondrion inner membrane</location>
        <topology evidence="1">Multi-pass membrane protein</topology>
    </subcellularLocation>
</comment>
<comment type="RNA editing">
    <location>
        <position position="52" evidence="3 4 5"/>
    </location>
    <location>
        <position position="81" evidence="3 4 5"/>
    </location>
    <location>
        <position position="91" evidence="5"/>
    </location>
    <location>
        <position position="120" evidence="3 4 5"/>
    </location>
    <location>
        <position position="125" evidence="3 4 5"/>
    </location>
    <location>
        <position position="133" evidence="3 4 5"/>
    </location>
    <location>
        <position position="165" evidence="3 4 5"/>
    </location>
    <location>
        <position position="183" evidence="3 4 5"/>
    </location>
    <location>
        <position position="185" evidence="3 4 5"/>
    </location>
    <location>
        <position position="200" evidence="3 4 5"/>
    </location>
    <location>
        <position position="203" evidence="3 4 5"/>
    </location>
    <location>
        <position position="210" evidence="3 4 5"/>
    </location>
    <location>
        <position position="226" evidence="3 4 5"/>
    </location>
    <location>
        <position position="238" evidence="3 4 5"/>
    </location>
    <location>
        <position position="242" evidence="3 4 5"/>
    </location>
    <location>
        <position position="255" evidence="3 4 5"/>
    </location>
    <location>
        <position position="279" evidence="3 4 5"/>
    </location>
    <location>
        <position position="288" evidence="5"/>
    </location>
    <location>
        <position position="292" evidence="3 4 5"/>
    </location>
    <location>
        <position position="497" evidence="3 4 5"/>
    </location>
    <location>
        <position position="517" evidence="3 4 5"/>
    </location>
    <location>
        <position position="527" evidence="3 4 5"/>
    </location>
    <location>
        <position position="537" evidence="5"/>
    </location>
    <location>
        <position position="632" evidence="3 4 5"/>
    </location>
    <location>
        <position position="639" evidence="3 4 5"/>
    </location>
    <location>
        <position position="640" evidence="3 4 5"/>
    </location>
    <location>
        <position position="653" evidence="3 4 5"/>
    </location>
</comment>
<comment type="miscellaneous">
    <text>Exons a and b (AtMg00513) and d and e (AtMg00060) are cis-spliced, while trans-splicing reactions are required to link exons b and c (AtMg00665) and c and d.</text>
</comment>
<comment type="similarity">
    <text evidence="6">Belongs to the complex I subunit 5 family.</text>
</comment>
<organism>
    <name type="scientific">Arabidopsis thaliana</name>
    <name type="common">Mouse-ear cress</name>
    <dbReference type="NCBI Taxonomy" id="3702"/>
    <lineage>
        <taxon>Eukaryota</taxon>
        <taxon>Viridiplantae</taxon>
        <taxon>Streptophyta</taxon>
        <taxon>Embryophyta</taxon>
        <taxon>Tracheophyta</taxon>
        <taxon>Spermatophyta</taxon>
        <taxon>Magnoliopsida</taxon>
        <taxon>eudicotyledons</taxon>
        <taxon>Gunneridae</taxon>
        <taxon>Pentapetalae</taxon>
        <taxon>rosids</taxon>
        <taxon>malvids</taxon>
        <taxon>Brassicales</taxon>
        <taxon>Brassicaceae</taxon>
        <taxon>Camelineae</taxon>
        <taxon>Arabidopsis</taxon>
    </lineage>
</organism>
<reference key="1">
    <citation type="journal article" date="1991" name="EMBO J.">
        <title>Trans splicing integrates an exon of 22 nucleotides into the nad5 mRNA in higher plant mitochondria.</title>
        <authorList>
            <person name="Knoop V."/>
            <person name="Schuster W."/>
            <person name="Wissinger B."/>
            <person name="Brennicke A."/>
        </authorList>
    </citation>
    <scope>NUCLEOTIDE SEQUENCE [MRNA]</scope>
    <scope>RNA EDITING</scope>
    <source>
        <strain>cv. Columbia</strain>
    </source>
</reference>
<reference key="2">
    <citation type="journal article" date="1997" name="Nat. Genet.">
        <title>The mitochondrial genome of Arabidopsis thaliana contains 57 genes in 366,924 nucleotides.</title>
        <authorList>
            <person name="Unseld M."/>
            <person name="Marienfeld J.R."/>
            <person name="Brandt P."/>
            <person name="Brennicke A."/>
        </authorList>
    </citation>
    <scope>NUCLEOTIDE SEQUENCE [LARGE SCALE GENOMIC DNA]</scope>
    <source>
        <strain>cv. C24</strain>
    </source>
</reference>
<reference key="3">
    <citation type="journal article" date="1999" name="Proc. Natl. Acad. Sci. U.S.A.">
        <title>RNA editing in Arabidopsis mitochondria effects 441 C to U changes in ORFs.</title>
        <authorList>
            <person name="Giege P."/>
            <person name="Brennicke A."/>
        </authorList>
    </citation>
    <scope>NUCLEOTIDE SEQUENCE [GENOMIC DNA]</scope>
    <scope>RNA EDITING</scope>
</reference>
<reference key="4">
    <citation type="journal article" date="2018" name="Plant Cell">
        <title>Correction of persistent errors in Arabidopsis reference mitochondrial genomes.</title>
        <authorList>
            <person name="Sloan D.B."/>
            <person name="Wu Z."/>
            <person name="Sharbrough J."/>
        </authorList>
    </citation>
    <scope>NUCLEOTIDE SEQUENCE [LARGE SCALE GENOMIC DNA]</scope>
    <scope>RNA EDITING</scope>
    <source>
        <strain>cv. Columbia</strain>
    </source>
</reference>
<sequence length="669" mass="74526">MYLLIVFLPLLGSSVAGFFGRFLGSEGSAIMTTTCVSFSSILSLIAFYEVALGASACYLRIAPWISSEMFDASWGFLFDSLTVVMLIVVTFISSLVHLYSISYMSEDPHSPRFMCYLSIFTFFMLMLVTGDNFLQLFLGWEGVGLASYLLIHFWFTRLQADKAAIKAMLVNRVGDFGLALGILGCFTLFQTVDFSTIFACASVPRNSWIFCNMRLNAISLICILLFIGAVGKSAQIGLHTWLPDAMEGPTPVSALIHAATMVTAGVFMIARCSPLFEYSPTALIVITFAGAMTSFLAATTGILQNDLKRVIAYSTCSQLGYMIFACGISNYSVSVFHLMNHAFFKALLFLSAGSVIHAMSDEQDMRKMGGLASSFPLTYAMMLIGSLSLIGFPFLTGFYSKDVILELAYTKYTISGNFAFWLGSISVLFTSYYSFRLLFLTFLVPTNSFGRDISRCHDAPIPMAIPSILLALGSLFVGYLAKDMMIGLGWNFWANSLLVLPKNEILAESEFAAPTIIKLIPILFSTLGAFVAYNVNLVADQFQRAFQTSTFCNRLYSFFNKRWFFDQVLNDFLVRSFLRFGYEVSFEALDKGAIEILGPYGISYTFRRLAERISQLQSGFVYHYAFAMLLGLTLFVTFFCMWDSLSSWVDNRLSFILIVSSFYTKSSQE</sequence>
<keyword id="KW-0002">3D-structure</keyword>
<keyword id="KW-0249">Electron transport</keyword>
<keyword id="KW-0472">Membrane</keyword>
<keyword id="KW-0496">Mitochondrion</keyword>
<keyword id="KW-0999">Mitochondrion inner membrane</keyword>
<keyword id="KW-0520">NAD</keyword>
<keyword id="KW-1185">Reference proteome</keyword>
<keyword id="KW-0679">Respiratory chain</keyword>
<keyword id="KW-0691">RNA editing</keyword>
<keyword id="KW-1278">Translocase</keyword>
<keyword id="KW-0812">Transmembrane</keyword>
<keyword id="KW-1133">Transmembrane helix</keyword>
<keyword id="KW-0813">Transport</keyword>
<keyword id="KW-0830">Ubiquinone</keyword>
<name>NU5M_ARATH</name>
<geneLocation type="mitochondrion"/>
<proteinExistence type="evidence at protein level"/>
<evidence type="ECO:0000250" key="1"/>
<evidence type="ECO:0000255" key="2"/>
<evidence type="ECO:0000269" key="3">
    <source>
    </source>
</evidence>
<evidence type="ECO:0000269" key="4">
    <source>
    </source>
</evidence>
<evidence type="ECO:0000269" key="5">
    <source>
    </source>
</evidence>
<evidence type="ECO:0000305" key="6"/>
<evidence type="ECO:0007829" key="7">
    <source>
        <dbReference type="PDB" id="7AQW"/>
    </source>
</evidence>
<evidence type="ECO:0007829" key="8">
    <source>
        <dbReference type="PDB" id="7ARB"/>
    </source>
</evidence>
<evidence type="ECO:0007829" key="9">
    <source>
        <dbReference type="PDB" id="8BEF"/>
    </source>
</evidence>
<evidence type="ECO:0007829" key="10">
    <source>
        <dbReference type="PDB" id="8BEH"/>
    </source>
</evidence>
<gene>
    <name type="primary">ND5</name>
    <name type="synonym">NAD5</name>
    <name type="synonym">NAD5C</name>
    <name type="ordered locus">AtMg00060/AtMg00513/AtMg00665</name>
</gene>
<protein>
    <recommendedName>
        <fullName>NADH-ubiquinone oxidoreductase chain 5</fullName>
        <ecNumber>7.1.1.2</ecNumber>
    </recommendedName>
    <alternativeName>
        <fullName>NADH dehydrogenase subunit 5</fullName>
    </alternativeName>
</protein>
<dbReference type="EC" id="7.1.1.2"/>
<dbReference type="EMBL" id="X60045">
    <property type="protein sequence ID" value="CAA42648.1"/>
    <property type="status" value="ALT_SEQ"/>
    <property type="molecule type" value="mRNA"/>
</dbReference>
<dbReference type="EMBL" id="X60047">
    <property type="protein sequence ID" value="CAA42648.1"/>
    <property type="status" value="JOINED"/>
    <property type="molecule type" value="mRNA"/>
</dbReference>
<dbReference type="EMBL" id="X60048">
    <property type="protein sequence ID" value="CAA42648.1"/>
    <property type="status" value="JOINED"/>
    <property type="molecule type" value="mRNA"/>
</dbReference>
<dbReference type="EMBL" id="Y08501">
    <property type="protein sequence ID" value="CAA69752.3"/>
    <property type="status" value="ALT_SEQ"/>
    <property type="molecule type" value="Genomic_DNA"/>
</dbReference>
<dbReference type="EMBL" id="BK010421">
    <property type="protein sequence ID" value="DAB41494.2"/>
    <property type="molecule type" value="Genomic_DNA"/>
</dbReference>
<dbReference type="PIR" id="S20234">
    <property type="entry name" value="DNMUU5"/>
</dbReference>
<dbReference type="RefSeq" id="NP_085478.1">
    <property type="nucleotide sequence ID" value="NC_001284.2"/>
</dbReference>
<dbReference type="PDB" id="7A23">
    <property type="method" value="EM"/>
    <property type="resolution" value="3.70 A"/>
    <property type="chains" value="a=1-669"/>
</dbReference>
<dbReference type="PDB" id="7AQQ">
    <property type="method" value="EM"/>
    <property type="resolution" value="3.06 A"/>
    <property type="chains" value="L=1-669"/>
</dbReference>
<dbReference type="PDB" id="7AQW">
    <property type="method" value="EM"/>
    <property type="resolution" value="3.17 A"/>
    <property type="chains" value="L=1-669"/>
</dbReference>
<dbReference type="PDB" id="7AR7">
    <property type="method" value="EM"/>
    <property type="resolution" value="3.72 A"/>
    <property type="chains" value="L=1-615"/>
</dbReference>
<dbReference type="PDB" id="7AR8">
    <property type="method" value="EM"/>
    <property type="resolution" value="3.53 A"/>
    <property type="chains" value="L=1-669"/>
</dbReference>
<dbReference type="PDB" id="7ARB">
    <property type="method" value="EM"/>
    <property type="resolution" value="3.41 A"/>
    <property type="chains" value="L=1-669"/>
</dbReference>
<dbReference type="PDB" id="8BEF">
    <property type="method" value="EM"/>
    <property type="resolution" value="2.13 A"/>
    <property type="chains" value="L=1-669"/>
</dbReference>
<dbReference type="PDB" id="8BEH">
    <property type="method" value="EM"/>
    <property type="resolution" value="2.29 A"/>
    <property type="chains" value="L=1-669"/>
</dbReference>
<dbReference type="PDB" id="8BPX">
    <property type="method" value="EM"/>
    <property type="resolution" value="2.09 A"/>
    <property type="chains" value="L=1-669"/>
</dbReference>
<dbReference type="PDB" id="8BQ5">
    <property type="method" value="EM"/>
    <property type="resolution" value="2.73 A"/>
    <property type="chains" value="L=1-669"/>
</dbReference>
<dbReference type="PDBsum" id="7A23"/>
<dbReference type="PDBsum" id="7AQQ"/>
<dbReference type="PDBsum" id="7AQW"/>
<dbReference type="PDBsum" id="7AR7"/>
<dbReference type="PDBsum" id="7AR8"/>
<dbReference type="PDBsum" id="7ARB"/>
<dbReference type="PDBsum" id="8BEF"/>
<dbReference type="PDBsum" id="8BEH"/>
<dbReference type="PDBsum" id="8BPX"/>
<dbReference type="PDBsum" id="8BQ5"/>
<dbReference type="EMDB" id="EMD-11875"/>
<dbReference type="EMDB" id="EMD-11876"/>
<dbReference type="EMDB" id="EMD-16003"/>
<dbReference type="EMDB" id="EMD-16168"/>
<dbReference type="SMR" id="P29388"/>
<dbReference type="FunCoup" id="P29388">
    <property type="interactions" value="149"/>
</dbReference>
<dbReference type="IntAct" id="P29388">
    <property type="interactions" value="2"/>
</dbReference>
<dbReference type="STRING" id="3702.A0A2P2CLC5"/>
<dbReference type="GlyGen" id="P29388">
    <property type="glycosylation" value="1 site"/>
</dbReference>
<dbReference type="PaxDb" id="3702-ATMG00060.1"/>
<dbReference type="PeptideAtlas" id="P29388"/>
<dbReference type="ProteomicsDB" id="250554"/>
<dbReference type="Araport" id="ATMG00060"/>
<dbReference type="Araport" id="ATMG00513"/>
<dbReference type="Araport" id="ATMG00665"/>
<dbReference type="TAIR" id="ATMG00060"/>
<dbReference type="eggNOG" id="KOG4668">
    <property type="taxonomic scope" value="Eukaryota"/>
</dbReference>
<dbReference type="HOGENOM" id="CLU_1500061_0_0_1"/>
<dbReference type="InParanoid" id="P29388"/>
<dbReference type="BioCyc" id="ARA:ATMG00513-MONOMER"/>
<dbReference type="BioCyc" id="MetaCyc:ATMG00513-MONOMER"/>
<dbReference type="PRO" id="PR:P29388"/>
<dbReference type="Proteomes" id="UP000006548">
    <property type="component" value="Mitochondrion MT"/>
</dbReference>
<dbReference type="ExpressionAtlas" id="P29388">
    <property type="expression patterns" value="baseline and differential"/>
</dbReference>
<dbReference type="GO" id="GO:0005743">
    <property type="term" value="C:mitochondrial inner membrane"/>
    <property type="evidence" value="ECO:0007669"/>
    <property type="project" value="UniProtKB-SubCell"/>
</dbReference>
<dbReference type="GO" id="GO:0009536">
    <property type="term" value="C:plastid"/>
    <property type="evidence" value="ECO:0007669"/>
    <property type="project" value="UniProtKB-ARBA"/>
</dbReference>
<dbReference type="GO" id="GO:0045271">
    <property type="term" value="C:respiratory chain complex I"/>
    <property type="evidence" value="ECO:0000318"/>
    <property type="project" value="GO_Central"/>
</dbReference>
<dbReference type="GO" id="GO:0008137">
    <property type="term" value="F:NADH dehydrogenase (ubiquinone) activity"/>
    <property type="evidence" value="ECO:0007669"/>
    <property type="project" value="UniProtKB-EC"/>
</dbReference>
<dbReference type="GO" id="GO:0042773">
    <property type="term" value="P:ATP synthesis coupled electron transport"/>
    <property type="evidence" value="ECO:0007669"/>
    <property type="project" value="InterPro"/>
</dbReference>
<dbReference type="GO" id="GO:0015990">
    <property type="term" value="P:electron transport coupled proton transport"/>
    <property type="evidence" value="ECO:0000318"/>
    <property type="project" value="GO_Central"/>
</dbReference>
<dbReference type="Gene3D" id="1.20.5.2700">
    <property type="match status" value="1"/>
</dbReference>
<dbReference type="InterPro" id="IPR010934">
    <property type="entry name" value="NADH_DH_su5_C"/>
</dbReference>
<dbReference type="InterPro" id="IPR018393">
    <property type="entry name" value="NADHpl_OxRdtase_5_subgr"/>
</dbReference>
<dbReference type="InterPro" id="IPR001750">
    <property type="entry name" value="ND/Mrp_TM"/>
</dbReference>
<dbReference type="InterPro" id="IPR003945">
    <property type="entry name" value="NU5C-like"/>
</dbReference>
<dbReference type="InterPro" id="IPR001516">
    <property type="entry name" value="Proton_antipo_N"/>
</dbReference>
<dbReference type="NCBIfam" id="TIGR01974">
    <property type="entry name" value="NDH_I_L"/>
    <property type="match status" value="1"/>
</dbReference>
<dbReference type="NCBIfam" id="NF005141">
    <property type="entry name" value="PRK06590.1"/>
    <property type="match status" value="1"/>
</dbReference>
<dbReference type="PANTHER" id="PTHR42829">
    <property type="entry name" value="NADH-UBIQUINONE OXIDOREDUCTASE CHAIN 5"/>
    <property type="match status" value="1"/>
</dbReference>
<dbReference type="PANTHER" id="PTHR42829:SF2">
    <property type="entry name" value="NADH-UBIQUINONE OXIDOREDUCTASE CHAIN 5"/>
    <property type="match status" value="1"/>
</dbReference>
<dbReference type="Pfam" id="PF06455">
    <property type="entry name" value="NADH5_C"/>
    <property type="match status" value="1"/>
</dbReference>
<dbReference type="Pfam" id="PF00361">
    <property type="entry name" value="Proton_antipo_M"/>
    <property type="match status" value="1"/>
</dbReference>
<dbReference type="Pfam" id="PF00662">
    <property type="entry name" value="Proton_antipo_N"/>
    <property type="match status" value="1"/>
</dbReference>
<dbReference type="PRINTS" id="PR01434">
    <property type="entry name" value="NADHDHGNASE5"/>
</dbReference>
<feature type="chain" id="PRO_0000118059" description="NADH-ubiquinone oxidoreductase chain 5">
    <location>
        <begin position="1"/>
        <end position="669"/>
    </location>
</feature>
<feature type="transmembrane region" description="Helical" evidence="2">
    <location>
        <begin position="3"/>
        <end position="23"/>
    </location>
</feature>
<feature type="transmembrane region" description="Helical" evidence="2">
    <location>
        <begin position="40"/>
        <end position="60"/>
    </location>
</feature>
<feature type="transmembrane region" description="Helical" evidence="2">
    <location>
        <begin position="76"/>
        <end position="96"/>
    </location>
</feature>
<feature type="transmembrane region" description="Helical" evidence="2">
    <location>
        <begin position="113"/>
        <end position="133"/>
    </location>
</feature>
<feature type="transmembrane region" description="Helical" evidence="2">
    <location>
        <begin position="136"/>
        <end position="156"/>
    </location>
</feature>
<feature type="transmembrane region" description="Helical" evidence="2">
    <location>
        <begin position="217"/>
        <end position="237"/>
    </location>
</feature>
<feature type="transmembrane region" description="Helical" evidence="2">
    <location>
        <begin position="250"/>
        <end position="270"/>
    </location>
</feature>
<feature type="transmembrane region" description="Helical" evidence="2">
    <location>
        <begin position="283"/>
        <end position="303"/>
    </location>
</feature>
<feature type="transmembrane region" description="Helical" evidence="2">
    <location>
        <begin position="319"/>
        <end position="339"/>
    </location>
</feature>
<feature type="transmembrane region" description="Helical" evidence="2">
    <location>
        <begin position="340"/>
        <end position="360"/>
    </location>
</feature>
<feature type="transmembrane region" description="Helical" evidence="2">
    <location>
        <begin position="375"/>
        <end position="395"/>
    </location>
</feature>
<feature type="transmembrane region" description="Helical" evidence="2">
    <location>
        <begin position="417"/>
        <end position="437"/>
    </location>
</feature>
<feature type="transmembrane region" description="Helical" evidence="2">
    <location>
        <begin position="461"/>
        <end position="481"/>
    </location>
</feature>
<feature type="transmembrane region" description="Helical" evidence="2">
    <location>
        <begin position="619"/>
        <end position="639"/>
    </location>
</feature>
<feature type="sequence conflict" description="In Ref. 1; CAA42648 and 2; CAA69752." evidence="6" ref="1 2">
    <original>I</original>
    <variation>V</variation>
    <location>
        <position position="425"/>
    </location>
</feature>
<feature type="sequence conflict" description="In Ref. 1; CAA42648 and 2; CAA69752." evidence="6" ref="1 2">
    <original>S</original>
    <variation>L</variation>
    <location>
        <position position="467"/>
    </location>
</feature>
<feature type="sequence conflict" description="In Ref. 1; CAA42648 and 2; CAA69752." evidence="6" ref="1 2">
    <original>W</original>
    <variation>T</variation>
    <location>
        <position position="490"/>
    </location>
</feature>
<feature type="helix" evidence="10">
    <location>
        <begin position="2"/>
        <end position="18"/>
    </location>
</feature>
<feature type="helix" evidence="10">
    <location>
        <begin position="20"/>
        <end position="50"/>
    </location>
</feature>
<feature type="turn" evidence="10">
    <location>
        <begin position="51"/>
        <end position="54"/>
    </location>
</feature>
<feature type="strand" evidence="10">
    <location>
        <begin position="57"/>
        <end position="67"/>
    </location>
</feature>
<feature type="strand" evidence="10">
    <location>
        <begin position="70"/>
        <end position="78"/>
    </location>
</feature>
<feature type="helix" evidence="10">
    <location>
        <begin position="80"/>
        <end position="103"/>
    </location>
</feature>
<feature type="turn" evidence="10">
    <location>
        <begin position="104"/>
        <end position="106"/>
    </location>
</feature>
<feature type="helix" evidence="10">
    <location>
        <begin position="110"/>
        <end position="129"/>
    </location>
</feature>
<feature type="strand" evidence="10">
    <location>
        <begin position="130"/>
        <end position="132"/>
    </location>
</feature>
<feature type="helix" evidence="10">
    <location>
        <begin position="133"/>
        <end position="151"/>
    </location>
</feature>
<feature type="helix" evidence="10">
    <location>
        <begin position="158"/>
        <end position="189"/>
    </location>
</feature>
<feature type="helix" evidence="10">
    <location>
        <begin position="194"/>
        <end position="200"/>
    </location>
</feature>
<feature type="strand" evidence="10">
    <location>
        <begin position="207"/>
        <end position="210"/>
    </location>
</feature>
<feature type="strand" evidence="10">
    <location>
        <begin position="213"/>
        <end position="216"/>
    </location>
</feature>
<feature type="helix" evidence="10">
    <location>
        <begin position="217"/>
        <end position="232"/>
    </location>
</feature>
<feature type="helix" evidence="10">
    <location>
        <begin position="236"/>
        <end position="238"/>
    </location>
</feature>
<feature type="helix" evidence="10">
    <location>
        <begin position="241"/>
        <end position="244"/>
    </location>
</feature>
<feature type="helix" evidence="10">
    <location>
        <begin position="245"/>
        <end position="247"/>
    </location>
</feature>
<feature type="helix" evidence="10">
    <location>
        <begin position="250"/>
        <end position="255"/>
    </location>
</feature>
<feature type="helix" evidence="10">
    <location>
        <begin position="256"/>
        <end position="260"/>
    </location>
</feature>
<feature type="helix" evidence="10">
    <location>
        <begin position="261"/>
        <end position="263"/>
    </location>
</feature>
<feature type="helix" evidence="10">
    <location>
        <begin position="264"/>
        <end position="271"/>
    </location>
</feature>
<feature type="helix" evidence="10">
    <location>
        <begin position="273"/>
        <end position="276"/>
    </location>
</feature>
<feature type="helix" evidence="10">
    <location>
        <begin position="280"/>
        <end position="301"/>
    </location>
</feature>
<feature type="helix" evidence="10">
    <location>
        <begin position="307"/>
        <end position="327"/>
    </location>
</feature>
<feature type="helix" evidence="10">
    <location>
        <begin position="331"/>
        <end position="358"/>
    </location>
</feature>
<feature type="turn" evidence="10">
    <location>
        <begin position="359"/>
        <end position="361"/>
    </location>
</feature>
<feature type="helix" evidence="10">
    <location>
        <begin position="365"/>
        <end position="367"/>
    </location>
</feature>
<feature type="turn" evidence="10">
    <location>
        <begin position="372"/>
        <end position="374"/>
    </location>
</feature>
<feature type="helix" evidence="10">
    <location>
        <begin position="376"/>
        <end position="390"/>
    </location>
</feature>
<feature type="strand" evidence="7">
    <location>
        <begin position="393"/>
        <end position="395"/>
    </location>
</feature>
<feature type="helix" evidence="10">
    <location>
        <begin position="398"/>
        <end position="410"/>
    </location>
</feature>
<feature type="helix" evidence="10">
    <location>
        <begin position="414"/>
        <end position="442"/>
    </location>
</feature>
<feature type="helix" evidence="10">
    <location>
        <begin position="450"/>
        <end position="453"/>
    </location>
</feature>
<feature type="helix" evidence="10">
    <location>
        <begin position="461"/>
        <end position="486"/>
    </location>
</feature>
<feature type="turn" evidence="10">
    <location>
        <begin position="492"/>
        <end position="495"/>
    </location>
</feature>
<feature type="helix" evidence="10">
    <location>
        <begin position="501"/>
        <end position="503"/>
    </location>
</feature>
<feature type="helix" evidence="10">
    <location>
        <begin position="506"/>
        <end position="511"/>
    </location>
</feature>
<feature type="helix" evidence="10">
    <location>
        <begin position="515"/>
        <end position="519"/>
    </location>
</feature>
<feature type="helix" evidence="10">
    <location>
        <begin position="520"/>
        <end position="537"/>
    </location>
</feature>
<feature type="helix" evidence="10">
    <location>
        <begin position="545"/>
        <end position="548"/>
    </location>
</feature>
<feature type="helix" evidence="10">
    <location>
        <begin position="550"/>
        <end position="560"/>
    </location>
</feature>
<feature type="helix" evidence="10">
    <location>
        <begin position="562"/>
        <end position="564"/>
    </location>
</feature>
<feature type="helix" evidence="10">
    <location>
        <begin position="565"/>
        <end position="572"/>
    </location>
</feature>
<feature type="helix" evidence="10">
    <location>
        <begin position="574"/>
        <end position="583"/>
    </location>
</feature>
<feature type="helix" evidence="10">
    <location>
        <begin position="584"/>
        <end position="588"/>
    </location>
</feature>
<feature type="turn" evidence="8">
    <location>
        <begin position="590"/>
        <end position="592"/>
    </location>
</feature>
<feature type="helix" evidence="9">
    <location>
        <begin position="593"/>
        <end position="596"/>
    </location>
</feature>
<feature type="helix" evidence="9">
    <location>
        <begin position="599"/>
        <end position="616"/>
    </location>
</feature>
<feature type="helix" evidence="9">
    <location>
        <begin position="621"/>
        <end position="639"/>
    </location>
</feature>
<feature type="helix" evidence="9">
    <location>
        <begin position="645"/>
        <end position="647"/>
    </location>
</feature>
<feature type="helix" evidence="9">
    <location>
        <begin position="651"/>
        <end position="660"/>
    </location>
</feature>
<accession>P29388</accession>
<accession>A0A2P2CLC5</accession>